<sequence length="254" mass="27451">MVIANSNIIFVAGLGGIGLDTSREIVKSGPKNLVVLDRVDNPAAIAELKALNPKVTVTFYPYDVTVPVAETKKLLKTIFDKLKTVDLLINGAGILDDNQIERTIAVNFTGTVNTTTAIMDFWDKRKGGPGGVIANICSVTGFNSIYQVPVYSASKAAALSFTTSLAKLAHITGVTAYSINPGITKTVLVHKFNSWLSVEPRVAELLLEHPTQTTLQCAQNFVKAIEANQNGAIWKLDLGRLDAIEWTKHWDSGI</sequence>
<reference key="1">
    <citation type="journal article" date="1991" name="Mol. Biol. Evol.">
        <title>Rates of DNA change and phylogeny from the DNA sequences of the alcohol dehydrogenase gene for five closely related species of Hawaiian Drosophila.</title>
        <authorList>
            <person name="Rowan R.G."/>
            <person name="Hunt J.A."/>
        </authorList>
    </citation>
    <scope>NUCLEOTIDE SEQUENCE [GENOMIC DNA]</scope>
</reference>
<dbReference type="EC" id="1.1.1.1"/>
<dbReference type="EMBL" id="M63390">
    <property type="protein sequence ID" value="AAA28352.1"/>
    <property type="molecule type" value="Genomic_DNA"/>
</dbReference>
<dbReference type="PIR" id="C23724">
    <property type="entry name" value="C23724"/>
</dbReference>
<dbReference type="SMR" id="P23277"/>
<dbReference type="GO" id="GO:0005737">
    <property type="term" value="C:cytoplasm"/>
    <property type="evidence" value="ECO:0007669"/>
    <property type="project" value="TreeGrafter"/>
</dbReference>
<dbReference type="GO" id="GO:0004022">
    <property type="term" value="F:alcohol dehydrogenase (NAD+) activity"/>
    <property type="evidence" value="ECO:0007669"/>
    <property type="project" value="UniProtKB-EC"/>
</dbReference>
<dbReference type="GO" id="GO:0006066">
    <property type="term" value="P:alcohol metabolic process"/>
    <property type="evidence" value="ECO:0007669"/>
    <property type="project" value="InterPro"/>
</dbReference>
<dbReference type="CDD" id="cd05323">
    <property type="entry name" value="ADH_SDR_c_like"/>
    <property type="match status" value="1"/>
</dbReference>
<dbReference type="FunFam" id="3.40.50.720:FF:000302">
    <property type="entry name" value="Alcohol dehydrogenase"/>
    <property type="match status" value="1"/>
</dbReference>
<dbReference type="Gene3D" id="3.40.50.720">
    <property type="entry name" value="NAD(P)-binding Rossmann-like Domain"/>
    <property type="match status" value="1"/>
</dbReference>
<dbReference type="InterPro" id="IPR002425">
    <property type="entry name" value="ADH_Drosophila-type"/>
</dbReference>
<dbReference type="InterPro" id="IPR036291">
    <property type="entry name" value="NAD(P)-bd_dom_sf"/>
</dbReference>
<dbReference type="InterPro" id="IPR020904">
    <property type="entry name" value="Sc_DH/Rdtase_CS"/>
</dbReference>
<dbReference type="InterPro" id="IPR002347">
    <property type="entry name" value="SDR_fam"/>
</dbReference>
<dbReference type="PANTHER" id="PTHR44229">
    <property type="entry name" value="15-HYDROXYPROSTAGLANDIN DEHYDROGENASE [NAD(+)]"/>
    <property type="match status" value="1"/>
</dbReference>
<dbReference type="PANTHER" id="PTHR44229:SF8">
    <property type="entry name" value="ALCOHOL DEHYDROGENASE-RELATED"/>
    <property type="match status" value="1"/>
</dbReference>
<dbReference type="Pfam" id="PF00106">
    <property type="entry name" value="adh_short"/>
    <property type="match status" value="1"/>
</dbReference>
<dbReference type="PRINTS" id="PR01168">
    <property type="entry name" value="ALCDHDRGNASE"/>
</dbReference>
<dbReference type="PRINTS" id="PR01167">
    <property type="entry name" value="INSADHFAMILY"/>
</dbReference>
<dbReference type="PRINTS" id="PR00080">
    <property type="entry name" value="SDRFAMILY"/>
</dbReference>
<dbReference type="SUPFAM" id="SSF51735">
    <property type="entry name" value="NAD(P)-binding Rossmann-fold domains"/>
    <property type="match status" value="1"/>
</dbReference>
<dbReference type="PROSITE" id="PS00061">
    <property type="entry name" value="ADH_SHORT"/>
    <property type="match status" value="1"/>
</dbReference>
<accession>P23277</accession>
<protein>
    <recommendedName>
        <fullName>Alcohol dehydrogenase</fullName>
        <ecNumber>1.1.1.1</ecNumber>
    </recommendedName>
</protein>
<name>ADH_DROPL</name>
<feature type="initiator methionine" description="Removed" evidence="1">
    <location>
        <position position="1"/>
    </location>
</feature>
<feature type="chain" id="PRO_0000054490" description="Alcohol dehydrogenase">
    <location>
        <begin position="2"/>
        <end position="254"/>
    </location>
</feature>
<feature type="active site" description="Proton acceptor" evidence="2">
    <location>
        <position position="151"/>
    </location>
</feature>
<feature type="binding site" evidence="1">
    <location>
        <begin position="10"/>
        <end position="33"/>
    </location>
    <ligand>
        <name>NAD(+)</name>
        <dbReference type="ChEBI" id="CHEBI:57540"/>
    </ligand>
</feature>
<feature type="binding site" evidence="1">
    <location>
        <position position="138"/>
    </location>
    <ligand>
        <name>substrate</name>
    </ligand>
</feature>
<proteinExistence type="inferred from homology"/>
<organism>
    <name type="scientific">Drosophila planitibia</name>
    <name type="common">Fruit fly</name>
    <dbReference type="NCBI Taxonomy" id="7236"/>
    <lineage>
        <taxon>Eukaryota</taxon>
        <taxon>Metazoa</taxon>
        <taxon>Ecdysozoa</taxon>
        <taxon>Arthropoda</taxon>
        <taxon>Hexapoda</taxon>
        <taxon>Insecta</taxon>
        <taxon>Pterygota</taxon>
        <taxon>Neoptera</taxon>
        <taxon>Endopterygota</taxon>
        <taxon>Diptera</taxon>
        <taxon>Brachycera</taxon>
        <taxon>Muscomorpha</taxon>
        <taxon>Ephydroidea</taxon>
        <taxon>Drosophilidae</taxon>
        <taxon>Drosophila</taxon>
        <taxon>Hawaiian Drosophila</taxon>
    </lineage>
</organism>
<comment type="catalytic activity">
    <reaction evidence="2">
        <text>a primary alcohol + NAD(+) = an aldehyde + NADH + H(+)</text>
        <dbReference type="Rhea" id="RHEA:10736"/>
        <dbReference type="ChEBI" id="CHEBI:15378"/>
        <dbReference type="ChEBI" id="CHEBI:15734"/>
        <dbReference type="ChEBI" id="CHEBI:17478"/>
        <dbReference type="ChEBI" id="CHEBI:57540"/>
        <dbReference type="ChEBI" id="CHEBI:57945"/>
        <dbReference type="EC" id="1.1.1.1"/>
    </reaction>
</comment>
<comment type="catalytic activity">
    <reaction evidence="2">
        <text>a secondary alcohol + NAD(+) = a ketone + NADH + H(+)</text>
        <dbReference type="Rhea" id="RHEA:10740"/>
        <dbReference type="ChEBI" id="CHEBI:15378"/>
        <dbReference type="ChEBI" id="CHEBI:17087"/>
        <dbReference type="ChEBI" id="CHEBI:35681"/>
        <dbReference type="ChEBI" id="CHEBI:57540"/>
        <dbReference type="ChEBI" id="CHEBI:57945"/>
        <dbReference type="EC" id="1.1.1.1"/>
    </reaction>
</comment>
<comment type="subunit">
    <text>Homodimer.</text>
</comment>
<comment type="similarity">
    <text evidence="3">Belongs to the short-chain dehydrogenases/reductases (SDR) family.</text>
</comment>
<evidence type="ECO:0000250" key="1"/>
<evidence type="ECO:0000255" key="2">
    <source>
        <dbReference type="PROSITE-ProRule" id="PRU10001"/>
    </source>
</evidence>
<evidence type="ECO:0000305" key="3"/>
<gene>
    <name type="primary">Adh</name>
</gene>
<keyword id="KW-0520">NAD</keyword>
<keyword id="KW-0560">Oxidoreductase</keyword>